<accession>Q4FLT4</accession>
<comment type="function">
    <text evidence="1">Catalyzes the reversible interconversion of serine and glycine with tetrahydrofolate (THF) serving as the one-carbon carrier. This reaction serves as the major source of one-carbon groups required for the biosynthesis of purines, thymidylate, methionine, and other important biomolecules. Also exhibits THF-independent aldolase activity toward beta-hydroxyamino acids, producing glycine and aldehydes, via a retro-aldol mechanism.</text>
</comment>
<comment type="catalytic activity">
    <reaction evidence="1">
        <text>(6R)-5,10-methylene-5,6,7,8-tetrahydrofolate + glycine + H2O = (6S)-5,6,7,8-tetrahydrofolate + L-serine</text>
        <dbReference type="Rhea" id="RHEA:15481"/>
        <dbReference type="ChEBI" id="CHEBI:15377"/>
        <dbReference type="ChEBI" id="CHEBI:15636"/>
        <dbReference type="ChEBI" id="CHEBI:33384"/>
        <dbReference type="ChEBI" id="CHEBI:57305"/>
        <dbReference type="ChEBI" id="CHEBI:57453"/>
        <dbReference type="EC" id="2.1.2.1"/>
    </reaction>
</comment>
<comment type="cofactor">
    <cofactor evidence="1">
        <name>pyridoxal 5'-phosphate</name>
        <dbReference type="ChEBI" id="CHEBI:597326"/>
    </cofactor>
</comment>
<comment type="pathway">
    <text evidence="1">One-carbon metabolism; tetrahydrofolate interconversion.</text>
</comment>
<comment type="pathway">
    <text evidence="1">Amino-acid biosynthesis; glycine biosynthesis; glycine from L-serine: step 1/1.</text>
</comment>
<comment type="subunit">
    <text evidence="1">Homodimer.</text>
</comment>
<comment type="subcellular location">
    <subcellularLocation>
        <location evidence="1">Cytoplasm</location>
    </subcellularLocation>
</comment>
<comment type="similarity">
    <text evidence="1">Belongs to the SHMT family.</text>
</comment>
<protein>
    <recommendedName>
        <fullName evidence="1">Serine hydroxymethyltransferase</fullName>
        <shortName evidence="1">SHMT</shortName>
        <shortName evidence="1">Serine methylase</shortName>
        <ecNumber evidence="1">2.1.2.1</ecNumber>
    </recommendedName>
</protein>
<keyword id="KW-0028">Amino-acid biosynthesis</keyword>
<keyword id="KW-0963">Cytoplasm</keyword>
<keyword id="KW-0554">One-carbon metabolism</keyword>
<keyword id="KW-0663">Pyridoxal phosphate</keyword>
<keyword id="KW-1185">Reference proteome</keyword>
<keyword id="KW-0808">Transferase</keyword>
<feature type="chain" id="PRO_0000234995" description="Serine hydroxymethyltransferase">
    <location>
        <begin position="1"/>
        <end position="436"/>
    </location>
</feature>
<feature type="binding site" evidence="1">
    <location>
        <position position="133"/>
    </location>
    <ligand>
        <name>(6S)-5,6,7,8-tetrahydrofolate</name>
        <dbReference type="ChEBI" id="CHEBI:57453"/>
    </ligand>
</feature>
<feature type="binding site" evidence="1">
    <location>
        <begin position="137"/>
        <end position="139"/>
    </location>
    <ligand>
        <name>(6S)-5,6,7,8-tetrahydrofolate</name>
        <dbReference type="ChEBI" id="CHEBI:57453"/>
    </ligand>
</feature>
<feature type="site" description="Plays an important role in substrate specificity" evidence="1">
    <location>
        <position position="241"/>
    </location>
</feature>
<feature type="modified residue" description="N6-(pyridoxal phosphate)lysine" evidence="1">
    <location>
        <position position="242"/>
    </location>
</feature>
<dbReference type="EC" id="2.1.2.1" evidence="1"/>
<dbReference type="EMBL" id="CP000084">
    <property type="protein sequence ID" value="AAZ21854.1"/>
    <property type="molecule type" value="Genomic_DNA"/>
</dbReference>
<dbReference type="RefSeq" id="WP_011282135.1">
    <property type="nucleotide sequence ID" value="NC_007205.1"/>
</dbReference>
<dbReference type="SMR" id="Q4FLT4"/>
<dbReference type="STRING" id="335992.SAR11_1048"/>
<dbReference type="GeneID" id="66295539"/>
<dbReference type="KEGG" id="pub:SAR11_1048"/>
<dbReference type="eggNOG" id="COG0112">
    <property type="taxonomic scope" value="Bacteria"/>
</dbReference>
<dbReference type="HOGENOM" id="CLU_022477_2_0_5"/>
<dbReference type="OrthoDB" id="9803846at2"/>
<dbReference type="UniPathway" id="UPA00193"/>
<dbReference type="UniPathway" id="UPA00288">
    <property type="reaction ID" value="UER01023"/>
</dbReference>
<dbReference type="Proteomes" id="UP000002528">
    <property type="component" value="Chromosome"/>
</dbReference>
<dbReference type="GO" id="GO:0005829">
    <property type="term" value="C:cytosol"/>
    <property type="evidence" value="ECO:0007669"/>
    <property type="project" value="TreeGrafter"/>
</dbReference>
<dbReference type="GO" id="GO:0004372">
    <property type="term" value="F:glycine hydroxymethyltransferase activity"/>
    <property type="evidence" value="ECO:0007669"/>
    <property type="project" value="UniProtKB-UniRule"/>
</dbReference>
<dbReference type="GO" id="GO:0030170">
    <property type="term" value="F:pyridoxal phosphate binding"/>
    <property type="evidence" value="ECO:0007669"/>
    <property type="project" value="UniProtKB-UniRule"/>
</dbReference>
<dbReference type="GO" id="GO:0019264">
    <property type="term" value="P:glycine biosynthetic process from serine"/>
    <property type="evidence" value="ECO:0007669"/>
    <property type="project" value="UniProtKB-UniRule"/>
</dbReference>
<dbReference type="GO" id="GO:0035999">
    <property type="term" value="P:tetrahydrofolate interconversion"/>
    <property type="evidence" value="ECO:0007669"/>
    <property type="project" value="UniProtKB-UniRule"/>
</dbReference>
<dbReference type="CDD" id="cd00378">
    <property type="entry name" value="SHMT"/>
    <property type="match status" value="1"/>
</dbReference>
<dbReference type="FunFam" id="3.40.640.10:FF:000001">
    <property type="entry name" value="Serine hydroxymethyltransferase"/>
    <property type="match status" value="1"/>
</dbReference>
<dbReference type="Gene3D" id="3.90.1150.10">
    <property type="entry name" value="Aspartate Aminotransferase, domain 1"/>
    <property type="match status" value="1"/>
</dbReference>
<dbReference type="Gene3D" id="3.40.640.10">
    <property type="entry name" value="Type I PLP-dependent aspartate aminotransferase-like (Major domain)"/>
    <property type="match status" value="1"/>
</dbReference>
<dbReference type="HAMAP" id="MF_00051">
    <property type="entry name" value="SHMT"/>
    <property type="match status" value="1"/>
</dbReference>
<dbReference type="InterPro" id="IPR015424">
    <property type="entry name" value="PyrdxlP-dep_Trfase"/>
</dbReference>
<dbReference type="InterPro" id="IPR015421">
    <property type="entry name" value="PyrdxlP-dep_Trfase_major"/>
</dbReference>
<dbReference type="InterPro" id="IPR015422">
    <property type="entry name" value="PyrdxlP-dep_Trfase_small"/>
</dbReference>
<dbReference type="InterPro" id="IPR001085">
    <property type="entry name" value="Ser_HO-MeTrfase"/>
</dbReference>
<dbReference type="InterPro" id="IPR049943">
    <property type="entry name" value="Ser_HO-MeTrfase-like"/>
</dbReference>
<dbReference type="InterPro" id="IPR039429">
    <property type="entry name" value="SHMT-like_dom"/>
</dbReference>
<dbReference type="NCBIfam" id="NF000586">
    <property type="entry name" value="PRK00011.1"/>
    <property type="match status" value="1"/>
</dbReference>
<dbReference type="PANTHER" id="PTHR11680">
    <property type="entry name" value="SERINE HYDROXYMETHYLTRANSFERASE"/>
    <property type="match status" value="1"/>
</dbReference>
<dbReference type="PANTHER" id="PTHR11680:SF35">
    <property type="entry name" value="SERINE HYDROXYMETHYLTRANSFERASE 1"/>
    <property type="match status" value="1"/>
</dbReference>
<dbReference type="Pfam" id="PF00464">
    <property type="entry name" value="SHMT"/>
    <property type="match status" value="1"/>
</dbReference>
<dbReference type="PIRSF" id="PIRSF000412">
    <property type="entry name" value="SHMT"/>
    <property type="match status" value="1"/>
</dbReference>
<dbReference type="SUPFAM" id="SSF53383">
    <property type="entry name" value="PLP-dependent transferases"/>
    <property type="match status" value="1"/>
</dbReference>
<sequence>MSSEKNYLNENYKSFFDDSLSVTDPELHKAISDELKRQQQHIELIASENIVSQAVLEAQGSVLTNKYAEGYPGKRYYNGCEHVDVAENLAIERLKKIFDCKFANAQPHSGAQANGAVFLALLNPGDTFMGMSLNSGGHITHGLKISMSGKWFNPIGYDVDKESELIDYDNVEKLALEHKPKLIICGGSAYSRVIDFKRFREIADKVGAYLMVDMAHFSGLVAGKGYPNPCEHAHVVTSTTHKVFRSARGGIILTNHEDLAKKFNTAVFPGYQGGPLMHVIAGKAAGFLEALRPDFKDYIKSVLANAKILSETLKNNGFKIYSGGTDTHLMLVDLRPFNVKGNAAAESLSNANITCNKNGIPFDSEKPMITSGIRLGTQAATTRGFGLKEFEKVGELITKVVKGLSENPEDNGKIEEEVRNEVIDLTSNFPIYKNLK</sequence>
<evidence type="ECO:0000255" key="1">
    <source>
        <dbReference type="HAMAP-Rule" id="MF_00051"/>
    </source>
</evidence>
<proteinExistence type="inferred from homology"/>
<gene>
    <name evidence="1" type="primary">glyA</name>
    <name type="ordered locus">SAR11_1048</name>
</gene>
<organism>
    <name type="scientific">Pelagibacter ubique (strain HTCC1062)</name>
    <dbReference type="NCBI Taxonomy" id="335992"/>
    <lineage>
        <taxon>Bacteria</taxon>
        <taxon>Pseudomonadati</taxon>
        <taxon>Pseudomonadota</taxon>
        <taxon>Alphaproteobacteria</taxon>
        <taxon>Candidatus Pelagibacterales</taxon>
        <taxon>Candidatus Pelagibacteraceae</taxon>
        <taxon>Candidatus Pelagibacter</taxon>
    </lineage>
</organism>
<reference key="1">
    <citation type="journal article" date="2005" name="Science">
        <title>Genome streamlining in a cosmopolitan oceanic bacterium.</title>
        <authorList>
            <person name="Giovannoni S.J."/>
            <person name="Tripp H.J."/>
            <person name="Givan S."/>
            <person name="Podar M."/>
            <person name="Vergin K.L."/>
            <person name="Baptista D."/>
            <person name="Bibbs L."/>
            <person name="Eads J."/>
            <person name="Richardson T.H."/>
            <person name="Noordewier M."/>
            <person name="Rappe M.S."/>
            <person name="Short J.M."/>
            <person name="Carrington J.C."/>
            <person name="Mathur E.J."/>
        </authorList>
    </citation>
    <scope>NUCLEOTIDE SEQUENCE [LARGE SCALE GENOMIC DNA]</scope>
    <source>
        <strain>HTCC1062</strain>
    </source>
</reference>
<name>GLYA_PELUB</name>